<comment type="function">
    <text evidence="1">NDH shuttles electrons from NAD(P)H:plastoquinone, via FMN and iron-sulfur (Fe-S) centers, to quinones in the photosynthetic chain and possibly in a chloroplast respiratory chain. The immediate electron acceptor for the enzyme in this species is believed to be plastoquinone. Couples the redox reaction to proton translocation, and thus conserves the redox energy in a proton gradient.</text>
</comment>
<comment type="catalytic activity">
    <reaction evidence="1">
        <text>a plastoquinone + NADH + (n+1) H(+)(in) = a plastoquinol + NAD(+) + n H(+)(out)</text>
        <dbReference type="Rhea" id="RHEA:42608"/>
        <dbReference type="Rhea" id="RHEA-COMP:9561"/>
        <dbReference type="Rhea" id="RHEA-COMP:9562"/>
        <dbReference type="ChEBI" id="CHEBI:15378"/>
        <dbReference type="ChEBI" id="CHEBI:17757"/>
        <dbReference type="ChEBI" id="CHEBI:57540"/>
        <dbReference type="ChEBI" id="CHEBI:57945"/>
        <dbReference type="ChEBI" id="CHEBI:62192"/>
    </reaction>
</comment>
<comment type="catalytic activity">
    <reaction evidence="1">
        <text>a plastoquinone + NADPH + (n+1) H(+)(in) = a plastoquinol + NADP(+) + n H(+)(out)</text>
        <dbReference type="Rhea" id="RHEA:42612"/>
        <dbReference type="Rhea" id="RHEA-COMP:9561"/>
        <dbReference type="Rhea" id="RHEA-COMP:9562"/>
        <dbReference type="ChEBI" id="CHEBI:15378"/>
        <dbReference type="ChEBI" id="CHEBI:17757"/>
        <dbReference type="ChEBI" id="CHEBI:57783"/>
        <dbReference type="ChEBI" id="CHEBI:58349"/>
        <dbReference type="ChEBI" id="CHEBI:62192"/>
    </reaction>
</comment>
<comment type="subunit">
    <text evidence="1">NDH is composed of at least 16 different subunits, 5 of which are encoded in the nucleus.</text>
</comment>
<comment type="subcellular location">
    <subcellularLocation>
        <location evidence="1">Plastid</location>
        <location evidence="1">Chloroplast thylakoid membrane</location>
        <topology evidence="1">Multi-pass membrane protein</topology>
    </subcellularLocation>
</comment>
<comment type="similarity">
    <text evidence="1">Belongs to the complex I subunit 2 family.</text>
</comment>
<name>NU2C1_CYCTA</name>
<geneLocation type="chloroplast"/>
<proteinExistence type="inferred from homology"/>
<evidence type="ECO:0000255" key="1">
    <source>
        <dbReference type="HAMAP-Rule" id="MF_00445"/>
    </source>
</evidence>
<accession>P0CC52</accession>
<accession>A6H5M6</accession>
<gene>
    <name evidence="1" type="primary">ndhB1</name>
</gene>
<reference key="1">
    <citation type="journal article" date="2007" name="Mol. Biol. Evol.">
        <title>Chloroplast genome (cpDNA) of Cycas taitungensis and 56 cp protein-coding genes of Gnetum parvifolium: insights into cpDNA evolution and phylogeny of extant seed plants.</title>
        <authorList>
            <person name="Wu C.-S."/>
            <person name="Wang Y.-N."/>
            <person name="Liu S.-M."/>
            <person name="Chaw S.-M."/>
        </authorList>
    </citation>
    <scope>NUCLEOTIDE SEQUENCE [LARGE SCALE GENOMIC DNA]</scope>
</reference>
<dbReference type="EC" id="7.1.1.-" evidence="1"/>
<dbReference type="EMBL" id="AP009339">
    <property type="protein sequence ID" value="BAF64992.1"/>
    <property type="molecule type" value="Genomic_DNA"/>
</dbReference>
<dbReference type="SMR" id="P0CC52"/>
<dbReference type="GO" id="GO:0009535">
    <property type="term" value="C:chloroplast thylakoid membrane"/>
    <property type="evidence" value="ECO:0007669"/>
    <property type="project" value="UniProtKB-SubCell"/>
</dbReference>
<dbReference type="GO" id="GO:0008137">
    <property type="term" value="F:NADH dehydrogenase (ubiquinone) activity"/>
    <property type="evidence" value="ECO:0007669"/>
    <property type="project" value="InterPro"/>
</dbReference>
<dbReference type="GO" id="GO:0048038">
    <property type="term" value="F:quinone binding"/>
    <property type="evidence" value="ECO:0007669"/>
    <property type="project" value="UniProtKB-KW"/>
</dbReference>
<dbReference type="GO" id="GO:0042773">
    <property type="term" value="P:ATP synthesis coupled electron transport"/>
    <property type="evidence" value="ECO:0007669"/>
    <property type="project" value="InterPro"/>
</dbReference>
<dbReference type="GO" id="GO:0019684">
    <property type="term" value="P:photosynthesis, light reaction"/>
    <property type="evidence" value="ECO:0007669"/>
    <property type="project" value="UniProtKB-UniRule"/>
</dbReference>
<dbReference type="HAMAP" id="MF_00445">
    <property type="entry name" value="NDH1_NuoN_1"/>
    <property type="match status" value="1"/>
</dbReference>
<dbReference type="InterPro" id="IPR010096">
    <property type="entry name" value="NADH-Q_OxRdtase_suN/2"/>
</dbReference>
<dbReference type="InterPro" id="IPR001750">
    <property type="entry name" value="ND/Mrp_TM"/>
</dbReference>
<dbReference type="InterPro" id="IPR045693">
    <property type="entry name" value="Ndh2_N"/>
</dbReference>
<dbReference type="NCBIfam" id="TIGR01770">
    <property type="entry name" value="NDH_I_N"/>
    <property type="match status" value="1"/>
</dbReference>
<dbReference type="NCBIfam" id="NF002701">
    <property type="entry name" value="PRK02504.1"/>
    <property type="match status" value="1"/>
</dbReference>
<dbReference type="PANTHER" id="PTHR22773">
    <property type="entry name" value="NADH DEHYDROGENASE"/>
    <property type="match status" value="1"/>
</dbReference>
<dbReference type="Pfam" id="PF19530">
    <property type="entry name" value="Ndh2_N"/>
    <property type="match status" value="1"/>
</dbReference>
<dbReference type="Pfam" id="PF00361">
    <property type="entry name" value="Proton_antipo_M"/>
    <property type="match status" value="1"/>
</dbReference>
<organism>
    <name type="scientific">Cycas taitungensis</name>
    <name type="common">Prince sago</name>
    <name type="synonym">Cycas taiwaniana</name>
    <dbReference type="NCBI Taxonomy" id="54799"/>
    <lineage>
        <taxon>Eukaryota</taxon>
        <taxon>Viridiplantae</taxon>
        <taxon>Streptophyta</taxon>
        <taxon>Embryophyta</taxon>
        <taxon>Tracheophyta</taxon>
        <taxon>Spermatophyta</taxon>
        <taxon>Cycadidae</taxon>
        <taxon>Cycadales</taxon>
        <taxon>Cycadaceae</taxon>
        <taxon>Cycas</taxon>
    </lineage>
</organism>
<protein>
    <recommendedName>
        <fullName evidence="1">NAD(P)H-quinone oxidoreductase subunit 2 A, chloroplastic</fullName>
        <ecNumber evidence="1">7.1.1.-</ecNumber>
    </recommendedName>
    <alternativeName>
        <fullName evidence="1">NAD(P)H dehydrogenase, subunit 2 A</fullName>
    </alternativeName>
    <alternativeName>
        <fullName evidence="1">NADH-plastoquinone oxidoreductase subunit 2 A</fullName>
    </alternativeName>
</protein>
<sequence length="494" mass="54844">MKEFHLLLFHGGSIFPECILILGLILLLMIDLTSDQKDTPWFYFISLTSLVMSITVLLFRWREEPMISFLGNFQTSNFSKIFRFLILLCSTLCIPLSVEYIKCTEMAITEFLLFLLTAALGGMVLCGANDLVTIFVALECFSLCSYLLSGYTKRDVRSNEATMKYLLMGGASSSILVYGFSWLYGLSGGEIELQEVVNGLINTQMYNSPGILIALISIAVGIGFKLSLVPFHQWTPDVYEGSPTPVVAFLSVTSKVAASALATRIFDLIFYFSSNEWHLLLEILAILSMILGNLIAITQTSMKRMLAYSSMGQIGYIIIGIIAGDSKNGYASMITYMLFYIFMNLGTFACIVLFGLRTGTDNIRDYAGLYTKDPFSAFSLALCLLSLGGIPPLAGFFGKLYLFWCGWQAGSYLLVSIGPLMSVISIYYYLKIIKLLMTERNKEITPHVQNYRRSPSSFISKNSIELSMIVCVTASTTLGIVMNPIIAIAQDTLF</sequence>
<keyword id="KW-0150">Chloroplast</keyword>
<keyword id="KW-0472">Membrane</keyword>
<keyword id="KW-0520">NAD</keyword>
<keyword id="KW-0521">NADP</keyword>
<keyword id="KW-0934">Plastid</keyword>
<keyword id="KW-0618">Plastoquinone</keyword>
<keyword id="KW-0874">Quinone</keyword>
<keyword id="KW-0793">Thylakoid</keyword>
<keyword id="KW-1278">Translocase</keyword>
<keyword id="KW-0812">Transmembrane</keyword>
<keyword id="KW-1133">Transmembrane helix</keyword>
<keyword id="KW-0813">Transport</keyword>
<feature type="chain" id="PRO_0000344265" description="NAD(P)H-quinone oxidoreductase subunit 2 A, chloroplastic">
    <location>
        <begin position="1"/>
        <end position="494"/>
    </location>
</feature>
<feature type="transmembrane region" description="Helical" evidence="1">
    <location>
        <begin position="6"/>
        <end position="26"/>
    </location>
</feature>
<feature type="transmembrane region" description="Helical" evidence="1">
    <location>
        <begin position="39"/>
        <end position="59"/>
    </location>
</feature>
<feature type="transmembrane region" description="Helical" evidence="1">
    <location>
        <begin position="81"/>
        <end position="101"/>
    </location>
</feature>
<feature type="transmembrane region" description="Helical" evidence="1">
    <location>
        <begin position="106"/>
        <end position="126"/>
    </location>
</feature>
<feature type="transmembrane region" description="Helical" evidence="1">
    <location>
        <begin position="131"/>
        <end position="151"/>
    </location>
</feature>
<feature type="transmembrane region" description="Helical" evidence="1">
    <location>
        <begin position="166"/>
        <end position="186"/>
    </location>
</feature>
<feature type="transmembrane region" description="Helical" evidence="1">
    <location>
        <begin position="211"/>
        <end position="231"/>
    </location>
</feature>
<feature type="transmembrane region" description="Helical" evidence="1">
    <location>
        <begin position="277"/>
        <end position="297"/>
    </location>
</feature>
<feature type="transmembrane region" description="Helical" evidence="1">
    <location>
        <begin position="305"/>
        <end position="325"/>
    </location>
</feature>
<feature type="transmembrane region" description="Helical" evidence="1">
    <location>
        <begin position="336"/>
        <end position="356"/>
    </location>
</feature>
<feature type="transmembrane region" description="Helical" evidence="1">
    <location>
        <begin position="377"/>
        <end position="397"/>
    </location>
</feature>
<feature type="transmembrane region" description="Helical" evidence="1">
    <location>
        <begin position="413"/>
        <end position="433"/>
    </location>
</feature>
<feature type="transmembrane region" description="Helical" evidence="1">
    <location>
        <begin position="468"/>
        <end position="488"/>
    </location>
</feature>